<gene>
    <name type="primary">fam167a</name>
    <name type="ORF">si:ch211-261f7.2</name>
</gene>
<organism>
    <name type="scientific">Danio rerio</name>
    <name type="common">Zebrafish</name>
    <name type="synonym">Brachydanio rerio</name>
    <dbReference type="NCBI Taxonomy" id="7955"/>
    <lineage>
        <taxon>Eukaryota</taxon>
        <taxon>Metazoa</taxon>
        <taxon>Chordata</taxon>
        <taxon>Craniata</taxon>
        <taxon>Vertebrata</taxon>
        <taxon>Euteleostomi</taxon>
        <taxon>Actinopterygii</taxon>
        <taxon>Neopterygii</taxon>
        <taxon>Teleostei</taxon>
        <taxon>Ostariophysi</taxon>
        <taxon>Cypriniformes</taxon>
        <taxon>Danionidae</taxon>
        <taxon>Danioninae</taxon>
        <taxon>Danio</taxon>
    </lineage>
</organism>
<dbReference type="EMBL" id="CR388122">
    <property type="protein sequence ID" value="CAI11938.1"/>
    <property type="molecule type" value="Genomic_DNA"/>
</dbReference>
<dbReference type="EMBL" id="BC128790">
    <property type="protein sequence ID" value="AAI28791.1"/>
    <property type="molecule type" value="mRNA"/>
</dbReference>
<dbReference type="RefSeq" id="NP_001020721.1">
    <property type="nucleotide sequence ID" value="NM_001025550.2"/>
</dbReference>
<dbReference type="RefSeq" id="XP_005160525.1">
    <property type="nucleotide sequence ID" value="XM_005160468.3"/>
</dbReference>
<dbReference type="RefSeq" id="XP_005160526.1">
    <property type="nucleotide sequence ID" value="XM_005160469.3"/>
</dbReference>
<dbReference type="SMR" id="Q5RFZ7"/>
<dbReference type="FunCoup" id="Q5RFZ7">
    <property type="interactions" value="924"/>
</dbReference>
<dbReference type="PaxDb" id="7955-ENSDARP00000116823"/>
<dbReference type="Ensembl" id="ENSDART00000142196">
    <property type="protein sequence ID" value="ENSDARP00000116823"/>
    <property type="gene ID" value="ENSDARG00000023952"/>
</dbReference>
<dbReference type="Ensembl" id="ENSDART00000174532">
    <property type="protein sequence ID" value="ENSDARP00000144004"/>
    <property type="gene ID" value="ENSDARG00000023952"/>
</dbReference>
<dbReference type="Ensembl" id="ENSDART00000183218">
    <property type="protein sequence ID" value="ENSDARP00000155490"/>
    <property type="gene ID" value="ENSDARG00000023952"/>
</dbReference>
<dbReference type="GeneID" id="567341"/>
<dbReference type="KEGG" id="dre:567341"/>
<dbReference type="AGR" id="ZFIN:ZDB-GENE-041014-11"/>
<dbReference type="CTD" id="567341"/>
<dbReference type="ZFIN" id="ZDB-GENE-041014-11">
    <property type="gene designation" value="fam167ab"/>
</dbReference>
<dbReference type="eggNOG" id="ENOG502RY4P">
    <property type="taxonomic scope" value="Eukaryota"/>
</dbReference>
<dbReference type="HOGENOM" id="CLU_111170_0_0_1"/>
<dbReference type="InParanoid" id="Q5RFZ7"/>
<dbReference type="OMA" id="PQIHIEE"/>
<dbReference type="OrthoDB" id="5965452at2759"/>
<dbReference type="PhylomeDB" id="Q5RFZ7"/>
<dbReference type="TreeFam" id="TF330468"/>
<dbReference type="PRO" id="PR:Q5RFZ7"/>
<dbReference type="Proteomes" id="UP000000437">
    <property type="component" value="Chromosome 20"/>
</dbReference>
<dbReference type="Bgee" id="ENSDARG00000023952">
    <property type="expression patterns" value="Expressed in heart and 11 other cell types or tissues"/>
</dbReference>
<dbReference type="InterPro" id="IPR024280">
    <property type="entry name" value="FAM167"/>
</dbReference>
<dbReference type="InterPro" id="IPR051771">
    <property type="entry name" value="FAM167_domain"/>
</dbReference>
<dbReference type="PANTHER" id="PTHR32289">
    <property type="entry name" value="PROTEIN FAM167A"/>
    <property type="match status" value="1"/>
</dbReference>
<dbReference type="PANTHER" id="PTHR32289:SF3">
    <property type="entry name" value="PROTEIN FAM167A"/>
    <property type="match status" value="1"/>
</dbReference>
<dbReference type="Pfam" id="PF11652">
    <property type="entry name" value="FAM167"/>
    <property type="match status" value="1"/>
</dbReference>
<protein>
    <recommendedName>
        <fullName>Protein FAM167A</fullName>
    </recommendedName>
</protein>
<reference key="1">
    <citation type="journal article" date="2013" name="Nature">
        <title>The zebrafish reference genome sequence and its relationship to the human genome.</title>
        <authorList>
            <person name="Howe K."/>
            <person name="Clark M.D."/>
            <person name="Torroja C.F."/>
            <person name="Torrance J."/>
            <person name="Berthelot C."/>
            <person name="Muffato M."/>
            <person name="Collins J.E."/>
            <person name="Humphray S."/>
            <person name="McLaren K."/>
            <person name="Matthews L."/>
            <person name="McLaren S."/>
            <person name="Sealy I."/>
            <person name="Caccamo M."/>
            <person name="Churcher C."/>
            <person name="Scott C."/>
            <person name="Barrett J.C."/>
            <person name="Koch R."/>
            <person name="Rauch G.J."/>
            <person name="White S."/>
            <person name="Chow W."/>
            <person name="Kilian B."/>
            <person name="Quintais L.T."/>
            <person name="Guerra-Assuncao J.A."/>
            <person name="Zhou Y."/>
            <person name="Gu Y."/>
            <person name="Yen J."/>
            <person name="Vogel J.H."/>
            <person name="Eyre T."/>
            <person name="Redmond S."/>
            <person name="Banerjee R."/>
            <person name="Chi J."/>
            <person name="Fu B."/>
            <person name="Langley E."/>
            <person name="Maguire S.F."/>
            <person name="Laird G.K."/>
            <person name="Lloyd D."/>
            <person name="Kenyon E."/>
            <person name="Donaldson S."/>
            <person name="Sehra H."/>
            <person name="Almeida-King J."/>
            <person name="Loveland J."/>
            <person name="Trevanion S."/>
            <person name="Jones M."/>
            <person name="Quail M."/>
            <person name="Willey D."/>
            <person name="Hunt A."/>
            <person name="Burton J."/>
            <person name="Sims S."/>
            <person name="McLay K."/>
            <person name="Plumb B."/>
            <person name="Davis J."/>
            <person name="Clee C."/>
            <person name="Oliver K."/>
            <person name="Clark R."/>
            <person name="Riddle C."/>
            <person name="Elliot D."/>
            <person name="Threadgold G."/>
            <person name="Harden G."/>
            <person name="Ware D."/>
            <person name="Begum S."/>
            <person name="Mortimore B."/>
            <person name="Kerry G."/>
            <person name="Heath P."/>
            <person name="Phillimore B."/>
            <person name="Tracey A."/>
            <person name="Corby N."/>
            <person name="Dunn M."/>
            <person name="Johnson C."/>
            <person name="Wood J."/>
            <person name="Clark S."/>
            <person name="Pelan S."/>
            <person name="Griffiths G."/>
            <person name="Smith M."/>
            <person name="Glithero R."/>
            <person name="Howden P."/>
            <person name="Barker N."/>
            <person name="Lloyd C."/>
            <person name="Stevens C."/>
            <person name="Harley J."/>
            <person name="Holt K."/>
            <person name="Panagiotidis G."/>
            <person name="Lovell J."/>
            <person name="Beasley H."/>
            <person name="Henderson C."/>
            <person name="Gordon D."/>
            <person name="Auger K."/>
            <person name="Wright D."/>
            <person name="Collins J."/>
            <person name="Raisen C."/>
            <person name="Dyer L."/>
            <person name="Leung K."/>
            <person name="Robertson L."/>
            <person name="Ambridge K."/>
            <person name="Leongamornlert D."/>
            <person name="McGuire S."/>
            <person name="Gilderthorp R."/>
            <person name="Griffiths C."/>
            <person name="Manthravadi D."/>
            <person name="Nichol S."/>
            <person name="Barker G."/>
            <person name="Whitehead S."/>
            <person name="Kay M."/>
            <person name="Brown J."/>
            <person name="Murnane C."/>
            <person name="Gray E."/>
            <person name="Humphries M."/>
            <person name="Sycamore N."/>
            <person name="Barker D."/>
            <person name="Saunders D."/>
            <person name="Wallis J."/>
            <person name="Babbage A."/>
            <person name="Hammond S."/>
            <person name="Mashreghi-Mohammadi M."/>
            <person name="Barr L."/>
            <person name="Martin S."/>
            <person name="Wray P."/>
            <person name="Ellington A."/>
            <person name="Matthews N."/>
            <person name="Ellwood M."/>
            <person name="Woodmansey R."/>
            <person name="Clark G."/>
            <person name="Cooper J."/>
            <person name="Tromans A."/>
            <person name="Grafham D."/>
            <person name="Skuce C."/>
            <person name="Pandian R."/>
            <person name="Andrews R."/>
            <person name="Harrison E."/>
            <person name="Kimberley A."/>
            <person name="Garnett J."/>
            <person name="Fosker N."/>
            <person name="Hall R."/>
            <person name="Garner P."/>
            <person name="Kelly D."/>
            <person name="Bird C."/>
            <person name="Palmer S."/>
            <person name="Gehring I."/>
            <person name="Berger A."/>
            <person name="Dooley C.M."/>
            <person name="Ersan-Urun Z."/>
            <person name="Eser C."/>
            <person name="Geiger H."/>
            <person name="Geisler M."/>
            <person name="Karotki L."/>
            <person name="Kirn A."/>
            <person name="Konantz J."/>
            <person name="Konantz M."/>
            <person name="Oberlander M."/>
            <person name="Rudolph-Geiger S."/>
            <person name="Teucke M."/>
            <person name="Lanz C."/>
            <person name="Raddatz G."/>
            <person name="Osoegawa K."/>
            <person name="Zhu B."/>
            <person name="Rapp A."/>
            <person name="Widaa S."/>
            <person name="Langford C."/>
            <person name="Yang F."/>
            <person name="Schuster S.C."/>
            <person name="Carter N.P."/>
            <person name="Harrow J."/>
            <person name="Ning Z."/>
            <person name="Herrero J."/>
            <person name="Searle S.M."/>
            <person name="Enright A."/>
            <person name="Geisler R."/>
            <person name="Plasterk R.H."/>
            <person name="Lee C."/>
            <person name="Westerfield M."/>
            <person name="de Jong P.J."/>
            <person name="Zon L.I."/>
            <person name="Postlethwait J.H."/>
            <person name="Nusslein-Volhard C."/>
            <person name="Hubbard T.J."/>
            <person name="Roest Crollius H."/>
            <person name="Rogers J."/>
            <person name="Stemple D.L."/>
        </authorList>
    </citation>
    <scope>NUCLEOTIDE SEQUENCE [LARGE SCALE GENOMIC DNA]</scope>
    <source>
        <strain>Tuebingen</strain>
    </source>
</reference>
<reference key="2">
    <citation type="submission" date="2006-12" db="EMBL/GenBank/DDBJ databases">
        <authorList>
            <consortium name="NIH - Zebrafish Gene Collection (ZGC) project"/>
        </authorList>
    </citation>
    <scope>NUCLEOTIDE SEQUENCE [LARGE SCALE MRNA]</scope>
    <source>
        <tissue>Embryo</tissue>
    </source>
</reference>
<keyword id="KW-0175">Coiled coil</keyword>
<keyword id="KW-1185">Reference proteome</keyword>
<sequence length="204" mass="23103">MDASSIPQINIEDFDGLEVAPDDHLRNLKALTEKLRLETRRPSYLEWKERVEAQNTKGLAVSDGSTELEKDAGLKPRATPQRTIEDSQMTAGNGLISRSLGGFDNIDEALVWLRKELMEMRIQDQQLARQLMRLRGDINKLKVEQTCHLHRRMLNDATFGLEERDELSDLLCDGPVTPGFGLSSPLRLIGVTKMNINSRRFSLC</sequence>
<accession>Q5RFZ7</accession>
<name>F167A_DANRE</name>
<feature type="chain" id="PRO_0000301688" description="Protein FAM167A">
    <location>
        <begin position="1"/>
        <end position="204"/>
    </location>
</feature>
<feature type="region of interest" description="Disordered" evidence="2">
    <location>
        <begin position="58"/>
        <end position="80"/>
    </location>
</feature>
<feature type="coiled-coil region" evidence="1">
    <location>
        <begin position="113"/>
        <end position="146"/>
    </location>
</feature>
<proteinExistence type="evidence at transcript level"/>
<comment type="similarity">
    <text evidence="3">Belongs to the FAM167 (SEC) family.</text>
</comment>
<evidence type="ECO:0000255" key="1"/>
<evidence type="ECO:0000256" key="2">
    <source>
        <dbReference type="SAM" id="MobiDB-lite"/>
    </source>
</evidence>
<evidence type="ECO:0000305" key="3"/>